<name>HUTI_PSYIN</name>
<evidence type="ECO:0000255" key="1">
    <source>
        <dbReference type="HAMAP-Rule" id="MF_00372"/>
    </source>
</evidence>
<proteinExistence type="inferred from homology"/>
<reference key="1">
    <citation type="journal article" date="2008" name="BMC Genomics">
        <title>Genomics of an extreme psychrophile, Psychromonas ingrahamii.</title>
        <authorList>
            <person name="Riley M."/>
            <person name="Staley J.T."/>
            <person name="Danchin A."/>
            <person name="Wang T.Z."/>
            <person name="Brettin T.S."/>
            <person name="Hauser L.J."/>
            <person name="Land M.L."/>
            <person name="Thompson L.S."/>
        </authorList>
    </citation>
    <scope>NUCLEOTIDE SEQUENCE [LARGE SCALE GENOMIC DNA]</scope>
    <source>
        <strain>DSM 17664 / CCUG 51855 / 37</strain>
    </source>
</reference>
<sequence>MNLLLTNASIVTVETNDTGYLIKHNHFINIINGKIAQIGGMASCPLASSGKQLDCEHKLLTPGFIDCHTHLVFAGNRANEFEQRLTGVPYQEIARQGGGIMTTVNATRKATEAQLLEKALQHLSGLIKDGVTTVEIKSGYGLDLESELKILRVAKQIEQQANIKVSTTLLAAHAVPLEFKDNPDRYIDYVCNTIIPAAVKAQLVDYVDIFCEGIGFNLKQTERVFKSALSFGLGIKGHTEQLSNSGGSALAAKMGASSVDHLEYLDETGVKALADNGTVATLLPGAFYFLRETQLPPVELLRTYKVPIALATDFNPGTSPIASLLMIMNMGCTLFGLTPEEALRGVTCHAAKALGLAQQRGQIKVGFEADLCLWNIQHPAQLAYEIGTNLLISRIINGVLCND</sequence>
<accession>A1STQ6</accession>
<gene>
    <name evidence="1" type="primary">hutI</name>
    <name type="ordered locus">Ping_1032</name>
</gene>
<organism>
    <name type="scientific">Psychromonas ingrahamii (strain DSM 17664 / CCUG 51855 / 37)</name>
    <dbReference type="NCBI Taxonomy" id="357804"/>
    <lineage>
        <taxon>Bacteria</taxon>
        <taxon>Pseudomonadati</taxon>
        <taxon>Pseudomonadota</taxon>
        <taxon>Gammaproteobacteria</taxon>
        <taxon>Alteromonadales</taxon>
        <taxon>Psychromonadaceae</taxon>
        <taxon>Psychromonas</taxon>
    </lineage>
</organism>
<protein>
    <recommendedName>
        <fullName evidence="1">Imidazolonepropionase</fullName>
        <ecNumber evidence="1">3.5.2.7</ecNumber>
    </recommendedName>
    <alternativeName>
        <fullName evidence="1">Imidazolone-5-propionate hydrolase</fullName>
    </alternativeName>
</protein>
<feature type="chain" id="PRO_0000306493" description="Imidazolonepropionase">
    <location>
        <begin position="1"/>
        <end position="403"/>
    </location>
</feature>
<feature type="binding site" evidence="1">
    <location>
        <position position="68"/>
    </location>
    <ligand>
        <name>Fe(3+)</name>
        <dbReference type="ChEBI" id="CHEBI:29034"/>
    </ligand>
</feature>
<feature type="binding site" evidence="1">
    <location>
        <position position="68"/>
    </location>
    <ligand>
        <name>Zn(2+)</name>
        <dbReference type="ChEBI" id="CHEBI:29105"/>
    </ligand>
</feature>
<feature type="binding site" evidence="1">
    <location>
        <position position="70"/>
    </location>
    <ligand>
        <name>Fe(3+)</name>
        <dbReference type="ChEBI" id="CHEBI:29034"/>
    </ligand>
</feature>
<feature type="binding site" evidence="1">
    <location>
        <position position="70"/>
    </location>
    <ligand>
        <name>Zn(2+)</name>
        <dbReference type="ChEBI" id="CHEBI:29105"/>
    </ligand>
</feature>
<feature type="binding site" evidence="1">
    <location>
        <position position="77"/>
    </location>
    <ligand>
        <name>4-imidazolone-5-propanoate</name>
        <dbReference type="ChEBI" id="CHEBI:77893"/>
    </ligand>
</feature>
<feature type="binding site" evidence="1">
    <location>
        <position position="140"/>
    </location>
    <ligand>
        <name>4-imidazolone-5-propanoate</name>
        <dbReference type="ChEBI" id="CHEBI:77893"/>
    </ligand>
</feature>
<feature type="binding site" evidence="1">
    <location>
        <position position="140"/>
    </location>
    <ligand>
        <name>N-formimidoyl-L-glutamate</name>
        <dbReference type="ChEBI" id="CHEBI:58928"/>
    </ligand>
</feature>
<feature type="binding site" evidence="1">
    <location>
        <position position="173"/>
    </location>
    <ligand>
        <name>4-imidazolone-5-propanoate</name>
        <dbReference type="ChEBI" id="CHEBI:77893"/>
    </ligand>
</feature>
<feature type="binding site" evidence="1">
    <location>
        <position position="238"/>
    </location>
    <ligand>
        <name>Fe(3+)</name>
        <dbReference type="ChEBI" id="CHEBI:29034"/>
    </ligand>
</feature>
<feature type="binding site" evidence="1">
    <location>
        <position position="238"/>
    </location>
    <ligand>
        <name>Zn(2+)</name>
        <dbReference type="ChEBI" id="CHEBI:29105"/>
    </ligand>
</feature>
<feature type="binding site" evidence="1">
    <location>
        <position position="241"/>
    </location>
    <ligand>
        <name>4-imidazolone-5-propanoate</name>
        <dbReference type="ChEBI" id="CHEBI:77893"/>
    </ligand>
</feature>
<feature type="binding site" evidence="1">
    <location>
        <position position="313"/>
    </location>
    <ligand>
        <name>Fe(3+)</name>
        <dbReference type="ChEBI" id="CHEBI:29034"/>
    </ligand>
</feature>
<feature type="binding site" evidence="1">
    <location>
        <position position="313"/>
    </location>
    <ligand>
        <name>Zn(2+)</name>
        <dbReference type="ChEBI" id="CHEBI:29105"/>
    </ligand>
</feature>
<feature type="binding site" evidence="1">
    <location>
        <position position="315"/>
    </location>
    <ligand>
        <name>N-formimidoyl-L-glutamate</name>
        <dbReference type="ChEBI" id="CHEBI:58928"/>
    </ligand>
</feature>
<feature type="binding site" evidence="1">
    <location>
        <position position="317"/>
    </location>
    <ligand>
        <name>N-formimidoyl-L-glutamate</name>
        <dbReference type="ChEBI" id="CHEBI:58928"/>
    </ligand>
</feature>
<feature type="binding site" evidence="1">
    <location>
        <position position="318"/>
    </location>
    <ligand>
        <name>4-imidazolone-5-propanoate</name>
        <dbReference type="ChEBI" id="CHEBI:77893"/>
    </ligand>
</feature>
<comment type="function">
    <text evidence="1">Catalyzes the hydrolytic cleavage of the carbon-nitrogen bond in imidazolone-5-propanoate to yield N-formimidoyl-L-glutamate. It is the third step in the universal histidine degradation pathway.</text>
</comment>
<comment type="catalytic activity">
    <reaction evidence="1">
        <text>4-imidazolone-5-propanoate + H2O = N-formimidoyl-L-glutamate</text>
        <dbReference type="Rhea" id="RHEA:23660"/>
        <dbReference type="ChEBI" id="CHEBI:15377"/>
        <dbReference type="ChEBI" id="CHEBI:58928"/>
        <dbReference type="ChEBI" id="CHEBI:77893"/>
        <dbReference type="EC" id="3.5.2.7"/>
    </reaction>
</comment>
<comment type="cofactor">
    <cofactor evidence="1">
        <name>Zn(2+)</name>
        <dbReference type="ChEBI" id="CHEBI:29105"/>
    </cofactor>
    <cofactor evidence="1">
        <name>Fe(3+)</name>
        <dbReference type="ChEBI" id="CHEBI:29034"/>
    </cofactor>
    <text evidence="1">Binds 1 zinc or iron ion per subunit.</text>
</comment>
<comment type="pathway">
    <text evidence="1">Amino-acid degradation; L-histidine degradation into L-glutamate; N-formimidoyl-L-glutamate from L-histidine: step 3/3.</text>
</comment>
<comment type="subcellular location">
    <subcellularLocation>
        <location evidence="1">Cytoplasm</location>
    </subcellularLocation>
</comment>
<comment type="similarity">
    <text evidence="1">Belongs to the metallo-dependent hydrolases superfamily. HutI family.</text>
</comment>
<dbReference type="EC" id="3.5.2.7" evidence="1"/>
<dbReference type="EMBL" id="CP000510">
    <property type="protein sequence ID" value="ABM02871.1"/>
    <property type="molecule type" value="Genomic_DNA"/>
</dbReference>
<dbReference type="RefSeq" id="WP_011769434.1">
    <property type="nucleotide sequence ID" value="NC_008709.1"/>
</dbReference>
<dbReference type="SMR" id="A1STQ6"/>
<dbReference type="STRING" id="357804.Ping_1032"/>
<dbReference type="KEGG" id="pin:Ping_1032"/>
<dbReference type="eggNOG" id="COG1228">
    <property type="taxonomic scope" value="Bacteria"/>
</dbReference>
<dbReference type="HOGENOM" id="CLU_041647_0_0_6"/>
<dbReference type="OrthoDB" id="9776455at2"/>
<dbReference type="UniPathway" id="UPA00379">
    <property type="reaction ID" value="UER00551"/>
</dbReference>
<dbReference type="Proteomes" id="UP000000639">
    <property type="component" value="Chromosome"/>
</dbReference>
<dbReference type="GO" id="GO:0005737">
    <property type="term" value="C:cytoplasm"/>
    <property type="evidence" value="ECO:0007669"/>
    <property type="project" value="UniProtKB-SubCell"/>
</dbReference>
<dbReference type="GO" id="GO:0050480">
    <property type="term" value="F:imidazolonepropionase activity"/>
    <property type="evidence" value="ECO:0007669"/>
    <property type="project" value="UniProtKB-UniRule"/>
</dbReference>
<dbReference type="GO" id="GO:0005506">
    <property type="term" value="F:iron ion binding"/>
    <property type="evidence" value="ECO:0007669"/>
    <property type="project" value="UniProtKB-UniRule"/>
</dbReference>
<dbReference type="GO" id="GO:0008270">
    <property type="term" value="F:zinc ion binding"/>
    <property type="evidence" value="ECO:0007669"/>
    <property type="project" value="UniProtKB-UniRule"/>
</dbReference>
<dbReference type="GO" id="GO:0019556">
    <property type="term" value="P:L-histidine catabolic process to glutamate and formamide"/>
    <property type="evidence" value="ECO:0007669"/>
    <property type="project" value="UniProtKB-UniPathway"/>
</dbReference>
<dbReference type="GO" id="GO:0019557">
    <property type="term" value="P:L-histidine catabolic process to glutamate and formate"/>
    <property type="evidence" value="ECO:0007669"/>
    <property type="project" value="UniProtKB-UniPathway"/>
</dbReference>
<dbReference type="CDD" id="cd01296">
    <property type="entry name" value="Imidazolone-5PH"/>
    <property type="match status" value="1"/>
</dbReference>
<dbReference type="FunFam" id="3.20.20.140:FF:000007">
    <property type="entry name" value="Imidazolonepropionase"/>
    <property type="match status" value="1"/>
</dbReference>
<dbReference type="Gene3D" id="3.20.20.140">
    <property type="entry name" value="Metal-dependent hydrolases"/>
    <property type="match status" value="1"/>
</dbReference>
<dbReference type="Gene3D" id="2.30.40.10">
    <property type="entry name" value="Urease, subunit C, domain 1"/>
    <property type="match status" value="1"/>
</dbReference>
<dbReference type="HAMAP" id="MF_00372">
    <property type="entry name" value="HutI"/>
    <property type="match status" value="1"/>
</dbReference>
<dbReference type="InterPro" id="IPR006680">
    <property type="entry name" value="Amidohydro-rel"/>
</dbReference>
<dbReference type="InterPro" id="IPR005920">
    <property type="entry name" value="HutI"/>
</dbReference>
<dbReference type="InterPro" id="IPR011059">
    <property type="entry name" value="Metal-dep_hydrolase_composite"/>
</dbReference>
<dbReference type="InterPro" id="IPR032466">
    <property type="entry name" value="Metal_Hydrolase"/>
</dbReference>
<dbReference type="NCBIfam" id="TIGR01224">
    <property type="entry name" value="hutI"/>
    <property type="match status" value="1"/>
</dbReference>
<dbReference type="PANTHER" id="PTHR42752">
    <property type="entry name" value="IMIDAZOLONEPROPIONASE"/>
    <property type="match status" value="1"/>
</dbReference>
<dbReference type="PANTHER" id="PTHR42752:SF1">
    <property type="entry name" value="IMIDAZOLONEPROPIONASE-RELATED"/>
    <property type="match status" value="1"/>
</dbReference>
<dbReference type="Pfam" id="PF01979">
    <property type="entry name" value="Amidohydro_1"/>
    <property type="match status" value="1"/>
</dbReference>
<dbReference type="SUPFAM" id="SSF51338">
    <property type="entry name" value="Composite domain of metallo-dependent hydrolases"/>
    <property type="match status" value="1"/>
</dbReference>
<dbReference type="SUPFAM" id="SSF51556">
    <property type="entry name" value="Metallo-dependent hydrolases"/>
    <property type="match status" value="1"/>
</dbReference>
<keyword id="KW-0963">Cytoplasm</keyword>
<keyword id="KW-0369">Histidine metabolism</keyword>
<keyword id="KW-0378">Hydrolase</keyword>
<keyword id="KW-0408">Iron</keyword>
<keyword id="KW-0479">Metal-binding</keyword>
<keyword id="KW-1185">Reference proteome</keyword>
<keyword id="KW-0862">Zinc</keyword>